<name>CIB2_DANRE</name>
<evidence type="ECO:0000250" key="1">
    <source>
        <dbReference type="UniProtKB" id="O75838"/>
    </source>
</evidence>
<evidence type="ECO:0000250" key="2">
    <source>
        <dbReference type="UniProtKB" id="Q9W2Q5"/>
    </source>
</evidence>
<evidence type="ECO:0000250" key="3">
    <source>
        <dbReference type="UniProtKB" id="Q9Z309"/>
    </source>
</evidence>
<evidence type="ECO:0000255" key="4">
    <source>
        <dbReference type="PROSITE-ProRule" id="PRU00448"/>
    </source>
</evidence>
<evidence type="ECO:0000269" key="5">
    <source>
    </source>
</evidence>
<evidence type="ECO:0000269" key="6">
    <source>
    </source>
</evidence>
<evidence type="ECO:0000305" key="7"/>
<evidence type="ECO:0000312" key="8">
    <source>
        <dbReference type="Proteomes" id="UP000000437"/>
    </source>
</evidence>
<evidence type="ECO:0000312" key="9">
    <source>
        <dbReference type="RefSeq" id="NP_957000.1"/>
    </source>
</evidence>
<evidence type="ECO:0000312" key="10">
    <source>
        <dbReference type="ZFIN" id="ZDB-GENE-040426-1663"/>
    </source>
</evidence>
<protein>
    <recommendedName>
        <fullName evidence="7">Calcium and integrin-binding family member 2</fullName>
    </recommendedName>
</protein>
<reference evidence="8" key="1">
    <citation type="journal article" date="2013" name="Nature">
        <title>The zebrafish reference genome sequence and its relationship to the human genome.</title>
        <authorList>
            <person name="Howe K."/>
            <person name="Clark M.D."/>
            <person name="Torroja C.F."/>
            <person name="Torrance J."/>
            <person name="Berthelot C."/>
            <person name="Muffato M."/>
            <person name="Collins J.E."/>
            <person name="Humphray S."/>
            <person name="McLaren K."/>
            <person name="Matthews L."/>
            <person name="McLaren S."/>
            <person name="Sealy I."/>
            <person name="Caccamo M."/>
            <person name="Churcher C."/>
            <person name="Scott C."/>
            <person name="Barrett J.C."/>
            <person name="Koch R."/>
            <person name="Rauch G.J."/>
            <person name="White S."/>
            <person name="Chow W."/>
            <person name="Kilian B."/>
            <person name="Quintais L.T."/>
            <person name="Guerra-Assuncao J.A."/>
            <person name="Zhou Y."/>
            <person name="Gu Y."/>
            <person name="Yen J."/>
            <person name="Vogel J.H."/>
            <person name="Eyre T."/>
            <person name="Redmond S."/>
            <person name="Banerjee R."/>
            <person name="Chi J."/>
            <person name="Fu B."/>
            <person name="Langley E."/>
            <person name="Maguire S.F."/>
            <person name="Laird G.K."/>
            <person name="Lloyd D."/>
            <person name="Kenyon E."/>
            <person name="Donaldson S."/>
            <person name="Sehra H."/>
            <person name="Almeida-King J."/>
            <person name="Loveland J."/>
            <person name="Trevanion S."/>
            <person name="Jones M."/>
            <person name="Quail M."/>
            <person name="Willey D."/>
            <person name="Hunt A."/>
            <person name="Burton J."/>
            <person name="Sims S."/>
            <person name="McLay K."/>
            <person name="Plumb B."/>
            <person name="Davis J."/>
            <person name="Clee C."/>
            <person name="Oliver K."/>
            <person name="Clark R."/>
            <person name="Riddle C."/>
            <person name="Elliot D."/>
            <person name="Threadgold G."/>
            <person name="Harden G."/>
            <person name="Ware D."/>
            <person name="Begum S."/>
            <person name="Mortimore B."/>
            <person name="Kerry G."/>
            <person name="Heath P."/>
            <person name="Phillimore B."/>
            <person name="Tracey A."/>
            <person name="Corby N."/>
            <person name="Dunn M."/>
            <person name="Johnson C."/>
            <person name="Wood J."/>
            <person name="Clark S."/>
            <person name="Pelan S."/>
            <person name="Griffiths G."/>
            <person name="Smith M."/>
            <person name="Glithero R."/>
            <person name="Howden P."/>
            <person name="Barker N."/>
            <person name="Lloyd C."/>
            <person name="Stevens C."/>
            <person name="Harley J."/>
            <person name="Holt K."/>
            <person name="Panagiotidis G."/>
            <person name="Lovell J."/>
            <person name="Beasley H."/>
            <person name="Henderson C."/>
            <person name="Gordon D."/>
            <person name="Auger K."/>
            <person name="Wright D."/>
            <person name="Collins J."/>
            <person name="Raisen C."/>
            <person name="Dyer L."/>
            <person name="Leung K."/>
            <person name="Robertson L."/>
            <person name="Ambridge K."/>
            <person name="Leongamornlert D."/>
            <person name="McGuire S."/>
            <person name="Gilderthorp R."/>
            <person name="Griffiths C."/>
            <person name="Manthravadi D."/>
            <person name="Nichol S."/>
            <person name="Barker G."/>
            <person name="Whitehead S."/>
            <person name="Kay M."/>
            <person name="Brown J."/>
            <person name="Murnane C."/>
            <person name="Gray E."/>
            <person name="Humphries M."/>
            <person name="Sycamore N."/>
            <person name="Barker D."/>
            <person name="Saunders D."/>
            <person name="Wallis J."/>
            <person name="Babbage A."/>
            <person name="Hammond S."/>
            <person name="Mashreghi-Mohammadi M."/>
            <person name="Barr L."/>
            <person name="Martin S."/>
            <person name="Wray P."/>
            <person name="Ellington A."/>
            <person name="Matthews N."/>
            <person name="Ellwood M."/>
            <person name="Woodmansey R."/>
            <person name="Clark G."/>
            <person name="Cooper J."/>
            <person name="Tromans A."/>
            <person name="Grafham D."/>
            <person name="Skuce C."/>
            <person name="Pandian R."/>
            <person name="Andrews R."/>
            <person name="Harrison E."/>
            <person name="Kimberley A."/>
            <person name="Garnett J."/>
            <person name="Fosker N."/>
            <person name="Hall R."/>
            <person name="Garner P."/>
            <person name="Kelly D."/>
            <person name="Bird C."/>
            <person name="Palmer S."/>
            <person name="Gehring I."/>
            <person name="Berger A."/>
            <person name="Dooley C.M."/>
            <person name="Ersan-Urun Z."/>
            <person name="Eser C."/>
            <person name="Geiger H."/>
            <person name="Geisler M."/>
            <person name="Karotki L."/>
            <person name="Kirn A."/>
            <person name="Konantz J."/>
            <person name="Konantz M."/>
            <person name="Oberlander M."/>
            <person name="Rudolph-Geiger S."/>
            <person name="Teucke M."/>
            <person name="Lanz C."/>
            <person name="Raddatz G."/>
            <person name="Osoegawa K."/>
            <person name="Zhu B."/>
            <person name="Rapp A."/>
            <person name="Widaa S."/>
            <person name="Langford C."/>
            <person name="Yang F."/>
            <person name="Schuster S.C."/>
            <person name="Carter N.P."/>
            <person name="Harrow J."/>
            <person name="Ning Z."/>
            <person name="Herrero J."/>
            <person name="Searle S.M."/>
            <person name="Enright A."/>
            <person name="Geisler R."/>
            <person name="Plasterk R.H."/>
            <person name="Lee C."/>
            <person name="Westerfield M."/>
            <person name="de Jong P.J."/>
            <person name="Zon L.I."/>
            <person name="Postlethwait J.H."/>
            <person name="Nusslein-Volhard C."/>
            <person name="Hubbard T.J."/>
            <person name="Roest Crollius H."/>
            <person name="Rogers J."/>
            <person name="Stemple D.L."/>
        </authorList>
    </citation>
    <scope>NUCLEOTIDE SEQUENCE [LARGE SCALE GENOMIC DNA]</scope>
    <source>
        <strain evidence="8">Tuebingen</strain>
    </source>
</reference>
<reference evidence="9" key="2">
    <citation type="journal article" date="2012" name="Nat. Genet.">
        <title>Alterations of the CIB2 calcium- and integrin-binding protein cause Usher syndrome type 1J and nonsyndromic deafness DFNB48.</title>
        <authorList>
            <person name="Riazuddin S."/>
            <person name="Belyantseva I.A."/>
            <person name="Giese A.P."/>
            <person name="Lee K."/>
            <person name="Indzhykulian A.A."/>
            <person name="Nandamuri S.P."/>
            <person name="Yousaf R."/>
            <person name="Sinha G.P."/>
            <person name="Lee S."/>
            <person name="Terrell D."/>
            <person name="Hegde R.S."/>
            <person name="Ali R.A."/>
            <person name="Anwar S."/>
            <person name="Andrade-Elizondo P.B."/>
            <person name="Sirmaci A."/>
            <person name="Parise L.V."/>
            <person name="Basit S."/>
            <person name="Wali A."/>
            <person name="Ayub M."/>
            <person name="Ansar M."/>
            <person name="Ahmad W."/>
            <person name="Khan S.N."/>
            <person name="Akram J."/>
            <person name="Tekin M."/>
            <person name="Riazuddin S."/>
            <person name="Cook T."/>
            <person name="Buschbeck E.K."/>
            <person name="Frolenkov G.I."/>
            <person name="Leal S.M."/>
            <person name="Friedman T.B."/>
            <person name="Ahmed Z.M."/>
        </authorList>
    </citation>
    <scope>FUNCTION</scope>
    <scope>DEVELOPMENTAL STAGE</scope>
    <scope>DISRUPTION PHENOTYPE</scope>
    <source>
        <strain evidence="9">Tuebingen</strain>
    </source>
</reference>
<reference evidence="7" key="3">
    <citation type="journal article" date="2023" name="Front. Mol. Neurosci.">
        <title>Differential expression of mechanotransduction complex genes in auditory/vestibular hair cells in zebrafish.</title>
        <authorList>
            <person name="Smith E.T."/>
            <person name="Sun P."/>
            <person name="Yu S.K."/>
            <person name="Raible D.W."/>
            <person name="Nicolson T."/>
        </authorList>
    </citation>
    <scope>TISSUE SPECIFICITY</scope>
</reference>
<gene>
    <name evidence="10" type="primary">cib2</name>
    <name evidence="9" type="synonym">zgc:73079</name>
</gene>
<comment type="function">
    <text evidence="2 3 5">Calcium- and integrin-binding protein (By similarity). Plays a role in intracellular calcium homeostasis (By similarity). Critical for proper photoreceptor cell maintenance and function (By similarity). Essential for development, maintenance and function of mechanosensory hair cells (PubMed:23023331).</text>
</comment>
<comment type="subunit">
    <text evidence="1">Monomer (By similarity). Homodimer (By similarity).</text>
</comment>
<comment type="subcellular location">
    <subcellularLocation>
        <location evidence="3">Cytoplasm</location>
    </subcellularLocation>
    <subcellularLocation>
        <location evidence="1">Cell projection</location>
        <location evidence="1">Stereocilium</location>
    </subcellularLocation>
    <subcellularLocation>
        <location evidence="3">Photoreceptor inner segment</location>
    </subcellularLocation>
    <subcellularLocation>
        <location evidence="3">Cell projection</location>
        <location evidence="3">Cilium</location>
        <location evidence="3">Photoreceptor outer segment</location>
    </subcellularLocation>
    <subcellularLocation>
        <location evidence="3">Cell membrane</location>
        <location evidence="3">Sarcolemma</location>
    </subcellularLocation>
</comment>
<comment type="tissue specificity">
    <text evidence="6">Enriched in central and striolar hair cells.</text>
</comment>
<comment type="developmental stage">
    <text evidence="5">Expressed throughout development.</text>
</comment>
<comment type="disruption phenotype">
    <text evidence="5">Morpholino knockdown leads to loss of response to acoustic stimuli (PubMed:23023331). Approximately 80% of morphants are unable to remain upright while swimming (PubMed:23023331). Decrease in number of neuromasts (PubMed:23023331). Loss of neuromast hair cell bundles at 96 hpf and a reduction in extracellular receptor potentials of neuromasts (PubMed:23023331).</text>
</comment>
<comment type="miscellaneous">
    <text evidence="1">The binding of either calcium or magnesium significantly increases the structural stability of the protein in comparison to apo-CIB (calcium- and magnesium-free form).</text>
</comment>
<proteinExistence type="evidence at transcript level"/>
<organism evidence="8">
    <name type="scientific">Danio rerio</name>
    <name type="common">Zebrafish</name>
    <name type="synonym">Brachydanio rerio</name>
    <dbReference type="NCBI Taxonomy" id="7955"/>
    <lineage>
        <taxon>Eukaryota</taxon>
        <taxon>Metazoa</taxon>
        <taxon>Chordata</taxon>
        <taxon>Craniata</taxon>
        <taxon>Vertebrata</taxon>
        <taxon>Euteleostomi</taxon>
        <taxon>Actinopterygii</taxon>
        <taxon>Neopterygii</taxon>
        <taxon>Teleostei</taxon>
        <taxon>Ostariophysi</taxon>
        <taxon>Cypriniformes</taxon>
        <taxon>Danionidae</taxon>
        <taxon>Danioninae</taxon>
        <taxon>Danio</taxon>
    </lineage>
</organism>
<feature type="chain" id="PRO_0000460691" description="Calcium and integrin-binding family member 2">
    <location>
        <begin position="1"/>
        <end position="187"/>
    </location>
</feature>
<feature type="domain" description="EF-hand 1" evidence="4">
    <location>
        <begin position="66"/>
        <end position="101"/>
    </location>
</feature>
<feature type="domain" description="EF-hand 2" evidence="4">
    <location>
        <begin position="103"/>
        <end position="138"/>
    </location>
</feature>
<feature type="domain" description="EF-hand 3" evidence="4">
    <location>
        <begin position="144"/>
        <end position="179"/>
    </location>
</feature>
<feature type="binding site" evidence="4">
    <location>
        <position position="157"/>
    </location>
    <ligand>
        <name>Ca(2+)</name>
        <dbReference type="ChEBI" id="CHEBI:29108"/>
    </ligand>
</feature>
<feature type="binding site" evidence="4">
    <location>
        <position position="159"/>
    </location>
    <ligand>
        <name>Ca(2+)</name>
        <dbReference type="ChEBI" id="CHEBI:29108"/>
    </ligand>
</feature>
<feature type="binding site" evidence="4">
    <location>
        <position position="161"/>
    </location>
    <ligand>
        <name>Ca(2+)</name>
        <dbReference type="ChEBI" id="CHEBI:29108"/>
    </ligand>
</feature>
<feature type="binding site" evidence="4">
    <location>
        <position position="163"/>
    </location>
    <ligand>
        <name>Ca(2+)</name>
        <dbReference type="ChEBI" id="CHEBI:29108"/>
    </ligand>
</feature>
<feature type="binding site" evidence="4">
    <location>
        <position position="168"/>
    </location>
    <ligand>
        <name>Ca(2+)</name>
        <dbReference type="ChEBI" id="CHEBI:29108"/>
    </ligand>
</feature>
<dbReference type="EMBL" id="CR381664">
    <property type="status" value="NOT_ANNOTATED_CDS"/>
    <property type="molecule type" value="Genomic_DNA"/>
</dbReference>
<dbReference type="EMBL" id="CR936457">
    <property type="status" value="NOT_ANNOTATED_CDS"/>
    <property type="molecule type" value="Genomic_DNA"/>
</dbReference>
<dbReference type="EMBL" id="BC059451">
    <property type="protein sequence ID" value="AAH59451.1"/>
    <property type="molecule type" value="mRNA"/>
</dbReference>
<dbReference type="RefSeq" id="NP_957000.1">
    <property type="nucleotide sequence ID" value="NM_200706.1"/>
</dbReference>
<dbReference type="SMR" id="Q6PC72"/>
<dbReference type="FunCoup" id="Q6PC72">
    <property type="interactions" value="663"/>
</dbReference>
<dbReference type="STRING" id="7955.ENSDARP00000130315"/>
<dbReference type="PaxDb" id="7955-ENSDARP00000098090"/>
<dbReference type="GeneID" id="393679"/>
<dbReference type="KEGG" id="dre:393679"/>
<dbReference type="AGR" id="ZFIN:ZDB-GENE-040426-1663"/>
<dbReference type="CTD" id="10518"/>
<dbReference type="ZFIN" id="ZDB-GENE-040426-1663">
    <property type="gene designation" value="cib2"/>
</dbReference>
<dbReference type="eggNOG" id="KOG0038">
    <property type="taxonomic scope" value="Eukaryota"/>
</dbReference>
<dbReference type="HOGENOM" id="CLU_061288_6_0_1"/>
<dbReference type="OMA" id="IEFQHVI"/>
<dbReference type="OrthoDB" id="114727at2759"/>
<dbReference type="TreeFam" id="TF313865"/>
<dbReference type="Proteomes" id="UP000000437">
    <property type="component" value="Chromosome 25"/>
</dbReference>
<dbReference type="Bgee" id="ENSDARG00000102820">
    <property type="expression patterns" value="Expressed in mature ovarian follicle and 23 other cell types or tissues"/>
</dbReference>
<dbReference type="GO" id="GO:0071944">
    <property type="term" value="C:cell periphery"/>
    <property type="evidence" value="ECO:0000318"/>
    <property type="project" value="GO_Central"/>
</dbReference>
<dbReference type="GO" id="GO:0005737">
    <property type="term" value="C:cytoplasm"/>
    <property type="evidence" value="ECO:0000318"/>
    <property type="project" value="GO_Central"/>
</dbReference>
<dbReference type="GO" id="GO:0001917">
    <property type="term" value="C:photoreceptor inner segment"/>
    <property type="evidence" value="ECO:0007669"/>
    <property type="project" value="UniProtKB-SubCell"/>
</dbReference>
<dbReference type="GO" id="GO:0001750">
    <property type="term" value="C:photoreceptor outer segment"/>
    <property type="evidence" value="ECO:0007669"/>
    <property type="project" value="UniProtKB-SubCell"/>
</dbReference>
<dbReference type="GO" id="GO:0042383">
    <property type="term" value="C:sarcolemma"/>
    <property type="evidence" value="ECO:0007669"/>
    <property type="project" value="UniProtKB-SubCell"/>
</dbReference>
<dbReference type="GO" id="GO:0032420">
    <property type="term" value="C:stereocilium"/>
    <property type="evidence" value="ECO:0000318"/>
    <property type="project" value="GO_Central"/>
</dbReference>
<dbReference type="GO" id="GO:0005509">
    <property type="term" value="F:calcium ion binding"/>
    <property type="evidence" value="ECO:0000318"/>
    <property type="project" value="GO_Central"/>
</dbReference>
<dbReference type="GO" id="GO:0000287">
    <property type="term" value="F:magnesium ion binding"/>
    <property type="evidence" value="ECO:0000318"/>
    <property type="project" value="GO_Central"/>
</dbReference>
<dbReference type="GO" id="GO:0055074">
    <property type="term" value="P:calcium ion homeostasis"/>
    <property type="evidence" value="ECO:0000318"/>
    <property type="project" value="GO_Central"/>
</dbReference>
<dbReference type="GO" id="GO:0043010">
    <property type="term" value="P:camera-type eye development"/>
    <property type="evidence" value="ECO:0000315"/>
    <property type="project" value="ZFIN"/>
</dbReference>
<dbReference type="GO" id="GO:0007638">
    <property type="term" value="P:mechanosensory behavior"/>
    <property type="evidence" value="ECO:0000315"/>
    <property type="project" value="ZFIN"/>
</dbReference>
<dbReference type="GO" id="GO:0048884">
    <property type="term" value="P:neuromast development"/>
    <property type="evidence" value="ECO:0000315"/>
    <property type="project" value="ZFIN"/>
</dbReference>
<dbReference type="CDD" id="cd00051">
    <property type="entry name" value="EFh"/>
    <property type="match status" value="1"/>
</dbReference>
<dbReference type="FunFam" id="1.10.238.10:FF:000079">
    <property type="entry name" value="Calcium and integrin-binding family member 2"/>
    <property type="match status" value="1"/>
</dbReference>
<dbReference type="Gene3D" id="1.10.238.10">
    <property type="entry name" value="EF-hand"/>
    <property type="match status" value="2"/>
</dbReference>
<dbReference type="InterPro" id="IPR051433">
    <property type="entry name" value="CIBP"/>
</dbReference>
<dbReference type="InterPro" id="IPR011992">
    <property type="entry name" value="EF-hand-dom_pair"/>
</dbReference>
<dbReference type="InterPro" id="IPR018247">
    <property type="entry name" value="EF_Hand_1_Ca_BS"/>
</dbReference>
<dbReference type="InterPro" id="IPR002048">
    <property type="entry name" value="EF_hand_dom"/>
</dbReference>
<dbReference type="PANTHER" id="PTHR45791">
    <property type="entry name" value="CALCIUM AND INTEGRIN BINDING FAMILY MEMBER 2"/>
    <property type="match status" value="1"/>
</dbReference>
<dbReference type="PANTHER" id="PTHR45791:SF5">
    <property type="entry name" value="CALCIUM AND INTEGRIN-BINDING FAMILY MEMBER 2"/>
    <property type="match status" value="1"/>
</dbReference>
<dbReference type="Pfam" id="PF13499">
    <property type="entry name" value="EF-hand_7"/>
    <property type="match status" value="1"/>
</dbReference>
<dbReference type="SMART" id="SM00054">
    <property type="entry name" value="EFh"/>
    <property type="match status" value="3"/>
</dbReference>
<dbReference type="SUPFAM" id="SSF47473">
    <property type="entry name" value="EF-hand"/>
    <property type="match status" value="1"/>
</dbReference>
<dbReference type="PROSITE" id="PS00018">
    <property type="entry name" value="EF_HAND_1"/>
    <property type="match status" value="1"/>
</dbReference>
<dbReference type="PROSITE" id="PS50222">
    <property type="entry name" value="EF_HAND_2"/>
    <property type="match status" value="2"/>
</dbReference>
<sequence length="187" mass="21759">MGNKQTIFTDEQLDAYQDCTFFTRKEILRLHGRYHELAPHLVPMDYTNDPDVKVPLALIVNMPELKENPFRNRIVESFSEDGQGNLSFNDFVDMFSVLSEMAPRELKAIYAFKIYDFNVDNYICKEDLEKTLNKLTKEELTPEEVNLVCEKAIEEADLDGDNKLSFADFENMISRAPDFLSTFHIRI</sequence>
<accession>Q6PC72</accession>
<accession>A0A8M1PEW7</accession>
<keyword id="KW-0106">Calcium</keyword>
<keyword id="KW-1003">Cell membrane</keyword>
<keyword id="KW-0966">Cell projection</keyword>
<keyword id="KW-0969">Cilium</keyword>
<keyword id="KW-0963">Cytoplasm</keyword>
<keyword id="KW-0460">Magnesium</keyword>
<keyword id="KW-0472">Membrane</keyword>
<keyword id="KW-0479">Metal-binding</keyword>
<keyword id="KW-1185">Reference proteome</keyword>
<keyword id="KW-0677">Repeat</keyword>